<proteinExistence type="inferred from homology"/>
<feature type="chain" id="PRO_0000155689" description="Endonuclease NucS 1">
    <location>
        <begin position="1"/>
        <end position="240"/>
    </location>
</feature>
<comment type="function">
    <text evidence="1">Cleaves both 3' and 5' ssDNA extremities of branched DNA structures.</text>
</comment>
<comment type="subcellular location">
    <subcellularLocation>
        <location evidence="1">Cytoplasm</location>
    </subcellularLocation>
</comment>
<comment type="similarity">
    <text evidence="1">Belongs to the NucS endonuclease family.</text>
</comment>
<evidence type="ECO:0000255" key="1">
    <source>
        <dbReference type="HAMAP-Rule" id="MF_00722"/>
    </source>
</evidence>
<sequence length="240" mass="24602">MPRTLTDPTADRAAAFATDAAADGLTVSLIGSCVATLTGRSQRDLAAGVRTLLWKPDDTVVVHGASGRDPDAWASGGPVTVDAADGLTVACDGGHTAGALRVRFDAVHTATAFDAAGADATTVSGTEAALKDRVLDTPDLVEPGFQPLATERDTPAGPIDIYGRDADGTVTAVELKNVRAGPAAASQLQRYVAALRRTLHADATVRGILVAPAVTAKTRRLLADRGLTFSPVSPPGSRDR</sequence>
<protein>
    <recommendedName>
        <fullName evidence="1">Endonuclease NucS 1</fullName>
        <ecNumber evidence="1">3.1.-.-</ecNumber>
    </recommendedName>
</protein>
<keyword id="KW-0963">Cytoplasm</keyword>
<keyword id="KW-0238">DNA-binding</keyword>
<keyword id="KW-0255">Endonuclease</keyword>
<keyword id="KW-0378">Hydrolase</keyword>
<keyword id="KW-0540">Nuclease</keyword>
<keyword id="KW-1185">Reference proteome</keyword>
<gene>
    <name evidence="1" type="primary">nucS1</name>
    <name type="ordered locus">VNG_0171C</name>
</gene>
<dbReference type="EC" id="3.1.-.-" evidence="1"/>
<dbReference type="EMBL" id="AE004437">
    <property type="protein sequence ID" value="AAG18787.1"/>
    <property type="molecule type" value="Genomic_DNA"/>
</dbReference>
<dbReference type="PIR" id="G84177">
    <property type="entry name" value="G84177"/>
</dbReference>
<dbReference type="SMR" id="Q9HSL7"/>
<dbReference type="PaxDb" id="64091-VNG_0171C"/>
<dbReference type="KEGG" id="hal:VNG_0171C"/>
<dbReference type="PATRIC" id="fig|64091.14.peg.123"/>
<dbReference type="HOGENOM" id="CLU_069350_1_0_2"/>
<dbReference type="InParanoid" id="Q9HSL7"/>
<dbReference type="OrthoDB" id="15177at2157"/>
<dbReference type="PhylomeDB" id="Q9HSL7"/>
<dbReference type="Proteomes" id="UP000000554">
    <property type="component" value="Chromosome"/>
</dbReference>
<dbReference type="GO" id="GO:0005737">
    <property type="term" value="C:cytoplasm"/>
    <property type="evidence" value="ECO:0007669"/>
    <property type="project" value="UniProtKB-SubCell"/>
</dbReference>
<dbReference type="GO" id="GO:0003677">
    <property type="term" value="F:DNA binding"/>
    <property type="evidence" value="ECO:0007669"/>
    <property type="project" value="UniProtKB-KW"/>
</dbReference>
<dbReference type="GO" id="GO:0000014">
    <property type="term" value="F:single-stranded DNA endodeoxyribonuclease activity"/>
    <property type="evidence" value="ECO:0007669"/>
    <property type="project" value="UniProtKB-UniRule"/>
</dbReference>
<dbReference type="CDD" id="cd22341">
    <property type="entry name" value="NucS-like"/>
    <property type="match status" value="1"/>
</dbReference>
<dbReference type="Gene3D" id="2.70.180.20">
    <property type="match status" value="1"/>
</dbReference>
<dbReference type="Gene3D" id="3.40.1350.10">
    <property type="match status" value="1"/>
</dbReference>
<dbReference type="HAMAP" id="MF_00722">
    <property type="entry name" value="NucS"/>
    <property type="match status" value="1"/>
</dbReference>
<dbReference type="InterPro" id="IPR002793">
    <property type="entry name" value="Endonuclease_NucS"/>
</dbReference>
<dbReference type="InterPro" id="IPR048301">
    <property type="entry name" value="NucS_C"/>
</dbReference>
<dbReference type="InterPro" id="IPR048302">
    <property type="entry name" value="NucS_N"/>
</dbReference>
<dbReference type="InterPro" id="IPR049173">
    <property type="entry name" value="NucS_N_sf"/>
</dbReference>
<dbReference type="InterPro" id="IPR010916">
    <property type="entry name" value="TonB_box_CS"/>
</dbReference>
<dbReference type="InterPro" id="IPR011856">
    <property type="entry name" value="tRNA_endonuc-like_dom_sf"/>
</dbReference>
<dbReference type="NCBIfam" id="NF003270">
    <property type="entry name" value="PRK04247.1"/>
    <property type="match status" value="1"/>
</dbReference>
<dbReference type="PANTHER" id="PTHR38814">
    <property type="entry name" value="ENDONUCLEASE NUCS"/>
    <property type="match status" value="1"/>
</dbReference>
<dbReference type="PANTHER" id="PTHR38814:SF1">
    <property type="entry name" value="ENDONUCLEASE NUCS"/>
    <property type="match status" value="1"/>
</dbReference>
<dbReference type="Pfam" id="PF01939">
    <property type="entry name" value="NucS_C"/>
    <property type="match status" value="1"/>
</dbReference>
<dbReference type="Pfam" id="PF21003">
    <property type="entry name" value="NucS_N"/>
    <property type="match status" value="1"/>
</dbReference>
<name>NUCS1_HALSA</name>
<organism>
    <name type="scientific">Halobacterium salinarum (strain ATCC 700922 / JCM 11081 / NRC-1)</name>
    <name type="common">Halobacterium halobium</name>
    <dbReference type="NCBI Taxonomy" id="64091"/>
    <lineage>
        <taxon>Archaea</taxon>
        <taxon>Methanobacteriati</taxon>
        <taxon>Methanobacteriota</taxon>
        <taxon>Stenosarchaea group</taxon>
        <taxon>Halobacteria</taxon>
        <taxon>Halobacteriales</taxon>
        <taxon>Halobacteriaceae</taxon>
        <taxon>Halobacterium</taxon>
        <taxon>Halobacterium salinarum NRC-34001</taxon>
    </lineage>
</organism>
<reference key="1">
    <citation type="journal article" date="2000" name="Proc. Natl. Acad. Sci. U.S.A.">
        <title>Genome sequence of Halobacterium species NRC-1.</title>
        <authorList>
            <person name="Ng W.V."/>
            <person name="Kennedy S.P."/>
            <person name="Mahairas G.G."/>
            <person name="Berquist B."/>
            <person name="Pan M."/>
            <person name="Shukla H.D."/>
            <person name="Lasky S.R."/>
            <person name="Baliga N.S."/>
            <person name="Thorsson V."/>
            <person name="Sbrogna J."/>
            <person name="Swartzell S."/>
            <person name="Weir D."/>
            <person name="Hall J."/>
            <person name="Dahl T.A."/>
            <person name="Welti R."/>
            <person name="Goo Y.A."/>
            <person name="Leithauser B."/>
            <person name="Keller K."/>
            <person name="Cruz R."/>
            <person name="Danson M.J."/>
            <person name="Hough D.W."/>
            <person name="Maddocks D.G."/>
            <person name="Jablonski P.E."/>
            <person name="Krebs M.P."/>
            <person name="Angevine C.M."/>
            <person name="Dale H."/>
            <person name="Isenbarger T.A."/>
            <person name="Peck R.F."/>
            <person name="Pohlschroder M."/>
            <person name="Spudich J.L."/>
            <person name="Jung K.-H."/>
            <person name="Alam M."/>
            <person name="Freitas T."/>
            <person name="Hou S."/>
            <person name="Daniels C.J."/>
            <person name="Dennis P.P."/>
            <person name="Omer A.D."/>
            <person name="Ebhardt H."/>
            <person name="Lowe T.M."/>
            <person name="Liang P."/>
            <person name="Riley M."/>
            <person name="Hood L."/>
            <person name="DasSarma S."/>
        </authorList>
    </citation>
    <scope>NUCLEOTIDE SEQUENCE [LARGE SCALE GENOMIC DNA]</scope>
    <source>
        <strain>ATCC 700922 / JCM 11081 / NRC-1</strain>
    </source>
</reference>
<accession>Q9HSL7</accession>